<name>RL32_STAES</name>
<gene>
    <name evidence="1" type="primary">rpmF</name>
    <name type="ordered locus">SE_0827</name>
</gene>
<accession>Q8CSZ2</accession>
<sequence>MAVPKRRTSKTRKNKRRTHFKISVPGMTECPNCGEYKLSHRVCKNCGSYNGEEVVSK</sequence>
<protein>
    <recommendedName>
        <fullName evidence="1">Large ribosomal subunit protein bL32</fullName>
    </recommendedName>
    <alternativeName>
        <fullName evidence="2">50S ribosomal protein L32</fullName>
    </alternativeName>
</protein>
<reference key="1">
    <citation type="journal article" date="2003" name="Mol. Microbiol.">
        <title>Genome-based analysis of virulence genes in a non-biofilm-forming Staphylococcus epidermidis strain (ATCC 12228).</title>
        <authorList>
            <person name="Zhang Y.-Q."/>
            <person name="Ren S.-X."/>
            <person name="Li H.-L."/>
            <person name="Wang Y.-X."/>
            <person name="Fu G."/>
            <person name="Yang J."/>
            <person name="Qin Z.-Q."/>
            <person name="Miao Y.-G."/>
            <person name="Wang W.-Y."/>
            <person name="Chen R.-S."/>
            <person name="Shen Y."/>
            <person name="Chen Z."/>
            <person name="Yuan Z.-H."/>
            <person name="Zhao G.-P."/>
            <person name="Qu D."/>
            <person name="Danchin A."/>
            <person name="Wen Y.-M."/>
        </authorList>
    </citation>
    <scope>NUCLEOTIDE SEQUENCE [LARGE SCALE GENOMIC DNA]</scope>
    <source>
        <strain>ATCC 12228 / FDA PCI 1200</strain>
    </source>
</reference>
<evidence type="ECO:0000255" key="1">
    <source>
        <dbReference type="HAMAP-Rule" id="MF_00340"/>
    </source>
</evidence>
<evidence type="ECO:0000305" key="2"/>
<feature type="chain" id="PRO_0000172408" description="Large ribosomal subunit protein bL32">
    <location>
        <begin position="1"/>
        <end position="57"/>
    </location>
</feature>
<comment type="similarity">
    <text evidence="1">Belongs to the bacterial ribosomal protein bL32 family.</text>
</comment>
<keyword id="KW-0687">Ribonucleoprotein</keyword>
<keyword id="KW-0689">Ribosomal protein</keyword>
<dbReference type="EMBL" id="AE015929">
    <property type="protein sequence ID" value="AAO04424.1"/>
    <property type="molecule type" value="Genomic_DNA"/>
</dbReference>
<dbReference type="RefSeq" id="NP_764382.1">
    <property type="nucleotide sequence ID" value="NC_004461.1"/>
</dbReference>
<dbReference type="RefSeq" id="WP_001830121.1">
    <property type="nucleotide sequence ID" value="NZ_WBME01000046.1"/>
</dbReference>
<dbReference type="SMR" id="Q8CSZ2"/>
<dbReference type="GeneID" id="93845503"/>
<dbReference type="KEGG" id="sep:SE_0827"/>
<dbReference type="PATRIC" id="fig|176280.10.peg.801"/>
<dbReference type="eggNOG" id="COG0333">
    <property type="taxonomic scope" value="Bacteria"/>
</dbReference>
<dbReference type="HOGENOM" id="CLU_129084_1_3_9"/>
<dbReference type="OrthoDB" id="9812874at2"/>
<dbReference type="PRO" id="PR:Q8CSZ2"/>
<dbReference type="Proteomes" id="UP000001411">
    <property type="component" value="Chromosome"/>
</dbReference>
<dbReference type="GO" id="GO:0015934">
    <property type="term" value="C:large ribosomal subunit"/>
    <property type="evidence" value="ECO:0007669"/>
    <property type="project" value="InterPro"/>
</dbReference>
<dbReference type="GO" id="GO:0003735">
    <property type="term" value="F:structural constituent of ribosome"/>
    <property type="evidence" value="ECO:0007669"/>
    <property type="project" value="InterPro"/>
</dbReference>
<dbReference type="GO" id="GO:0006412">
    <property type="term" value="P:translation"/>
    <property type="evidence" value="ECO:0007669"/>
    <property type="project" value="UniProtKB-UniRule"/>
</dbReference>
<dbReference type="Gene3D" id="1.20.5.640">
    <property type="entry name" value="Single helix bin"/>
    <property type="match status" value="1"/>
</dbReference>
<dbReference type="HAMAP" id="MF_00340">
    <property type="entry name" value="Ribosomal_bL32"/>
    <property type="match status" value="1"/>
</dbReference>
<dbReference type="InterPro" id="IPR002677">
    <property type="entry name" value="Ribosomal_bL32"/>
</dbReference>
<dbReference type="InterPro" id="IPR044957">
    <property type="entry name" value="Ribosomal_bL32_bact"/>
</dbReference>
<dbReference type="InterPro" id="IPR011332">
    <property type="entry name" value="Ribosomal_zn-bd"/>
</dbReference>
<dbReference type="NCBIfam" id="TIGR01031">
    <property type="entry name" value="rpmF_bact"/>
    <property type="match status" value="1"/>
</dbReference>
<dbReference type="PANTHER" id="PTHR35534">
    <property type="entry name" value="50S RIBOSOMAL PROTEIN L32"/>
    <property type="match status" value="1"/>
</dbReference>
<dbReference type="PANTHER" id="PTHR35534:SF2">
    <property type="entry name" value="LARGE RIBOSOMAL SUBUNIT PROTEIN BL32"/>
    <property type="match status" value="1"/>
</dbReference>
<dbReference type="Pfam" id="PF01783">
    <property type="entry name" value="Ribosomal_L32p"/>
    <property type="match status" value="1"/>
</dbReference>
<dbReference type="SUPFAM" id="SSF57829">
    <property type="entry name" value="Zn-binding ribosomal proteins"/>
    <property type="match status" value="1"/>
</dbReference>
<proteinExistence type="inferred from homology"/>
<organism>
    <name type="scientific">Staphylococcus epidermidis (strain ATCC 12228 / FDA PCI 1200)</name>
    <dbReference type="NCBI Taxonomy" id="176280"/>
    <lineage>
        <taxon>Bacteria</taxon>
        <taxon>Bacillati</taxon>
        <taxon>Bacillota</taxon>
        <taxon>Bacilli</taxon>
        <taxon>Bacillales</taxon>
        <taxon>Staphylococcaceae</taxon>
        <taxon>Staphylococcus</taxon>
    </lineage>
</organism>